<feature type="initiator methionine" description="Removed" evidence="4">
    <location>
        <position position="1"/>
    </location>
</feature>
<feature type="chain" id="PRO_0000207444" description="ADP-ribosylation factor 6">
    <location>
        <begin position="2"/>
        <end position="175"/>
    </location>
</feature>
<feature type="binding site" evidence="1">
    <location>
        <begin position="20"/>
        <end position="27"/>
    </location>
    <ligand>
        <name>GTP</name>
        <dbReference type="ChEBI" id="CHEBI:37565"/>
    </ligand>
</feature>
<feature type="binding site" evidence="1">
    <location>
        <begin position="63"/>
        <end position="67"/>
    </location>
    <ligand>
        <name>GTP</name>
        <dbReference type="ChEBI" id="CHEBI:37565"/>
    </ligand>
</feature>
<feature type="binding site" evidence="1">
    <location>
        <begin position="122"/>
        <end position="125"/>
    </location>
    <ligand>
        <name>GTP</name>
        <dbReference type="ChEBI" id="CHEBI:37565"/>
    </ligand>
</feature>
<feature type="lipid moiety-binding region" description="N-myristoyl glycine" evidence="4">
    <location>
        <position position="2"/>
    </location>
</feature>
<feature type="sequence conflict" description="In Ref. 1; AAA28378/AAA53668." evidence="8" ref="1">
    <original>P</original>
    <variation>G</variation>
    <location>
        <position position="43"/>
    </location>
</feature>
<sequence length="175" mass="20005">MGKLLSKIFGNKEMRILMLGLDAAGKTTILYKLKLGQSVTTIPTVGFNVETVTYKNVKFNVWDVGGQDKIRPLWRHYYTGTQGLIFVVDCADRDRIDEARTELHRIINDREMRDAIILIFANKQDLPDAMKPHEIQEKLGLTRIRDRNWYVQPSCATSGDGLSEGLIWLTSNHKL</sequence>
<proteinExistence type="evidence at protein level"/>
<name>ARF6_DROME</name>
<dbReference type="EMBL" id="L25063">
    <property type="protein sequence ID" value="AAA28378.1"/>
    <property type="molecule type" value="mRNA"/>
</dbReference>
<dbReference type="EMBL" id="L25064">
    <property type="protein sequence ID" value="AAA53668.1"/>
    <property type="molecule type" value="Genomic_DNA"/>
</dbReference>
<dbReference type="EMBL" id="AE013599">
    <property type="protein sequence ID" value="AAF58148.1"/>
    <property type="molecule type" value="Genomic_DNA"/>
</dbReference>
<dbReference type="EMBL" id="AE013599">
    <property type="protein sequence ID" value="AAM68533.1"/>
    <property type="molecule type" value="Genomic_DNA"/>
</dbReference>
<dbReference type="EMBL" id="AE013599">
    <property type="protein sequence ID" value="AAM68534.1"/>
    <property type="molecule type" value="Genomic_DNA"/>
</dbReference>
<dbReference type="EMBL" id="AE013599">
    <property type="protein sequence ID" value="AAM68535.1"/>
    <property type="molecule type" value="Genomic_DNA"/>
</dbReference>
<dbReference type="EMBL" id="AY071116">
    <property type="protein sequence ID" value="AAL48738.1"/>
    <property type="molecule type" value="mRNA"/>
</dbReference>
<dbReference type="PIR" id="B53859">
    <property type="entry name" value="B53859"/>
</dbReference>
<dbReference type="RefSeq" id="NP_523751.2">
    <property type="nucleotide sequence ID" value="NM_079027.3"/>
</dbReference>
<dbReference type="RefSeq" id="NP_725452.1">
    <property type="nucleotide sequence ID" value="NM_166088.2"/>
</dbReference>
<dbReference type="RefSeq" id="NP_725453.1">
    <property type="nucleotide sequence ID" value="NM_166089.2"/>
</dbReference>
<dbReference type="RefSeq" id="NP_725454.1">
    <property type="nucleotide sequence ID" value="NM_166090.2"/>
</dbReference>
<dbReference type="RefSeq" id="NP_725455.1">
    <property type="nucleotide sequence ID" value="NM_166091.2"/>
</dbReference>
<dbReference type="SMR" id="P40946"/>
<dbReference type="BioGRID" id="62436">
    <property type="interactions" value="30"/>
</dbReference>
<dbReference type="FunCoup" id="P40946">
    <property type="interactions" value="1639"/>
</dbReference>
<dbReference type="IntAct" id="P40946">
    <property type="interactions" value="1"/>
</dbReference>
<dbReference type="STRING" id="7227.FBpp0086507"/>
<dbReference type="PaxDb" id="7227-FBpp0086507"/>
<dbReference type="DNASU" id="36699"/>
<dbReference type="EnsemblMetazoa" id="FBtr0087375">
    <property type="protein sequence ID" value="FBpp0086507"/>
    <property type="gene ID" value="FBgn0013750"/>
</dbReference>
<dbReference type="EnsemblMetazoa" id="FBtr0087376">
    <property type="protein sequence ID" value="FBpp0086508"/>
    <property type="gene ID" value="FBgn0013750"/>
</dbReference>
<dbReference type="EnsemblMetazoa" id="FBtr0087377">
    <property type="protein sequence ID" value="FBpp0086509"/>
    <property type="gene ID" value="FBgn0013750"/>
</dbReference>
<dbReference type="EnsemblMetazoa" id="FBtr0087378">
    <property type="protein sequence ID" value="FBpp0086510"/>
    <property type="gene ID" value="FBgn0013750"/>
</dbReference>
<dbReference type="EnsemblMetazoa" id="FBtr0087379">
    <property type="protein sequence ID" value="FBpp0086511"/>
    <property type="gene ID" value="FBgn0013750"/>
</dbReference>
<dbReference type="GeneID" id="36699"/>
<dbReference type="KEGG" id="dme:Dmel_CG8156"/>
<dbReference type="UCSC" id="CG8156-RC">
    <property type="organism name" value="d. melanogaster"/>
</dbReference>
<dbReference type="AGR" id="FB:FBgn0013750"/>
<dbReference type="CTD" id="382"/>
<dbReference type="FlyBase" id="FBgn0013750">
    <property type="gene designation" value="Arf6"/>
</dbReference>
<dbReference type="VEuPathDB" id="VectorBase:FBgn0013750"/>
<dbReference type="eggNOG" id="KOG0071">
    <property type="taxonomic scope" value="Eukaryota"/>
</dbReference>
<dbReference type="GeneTree" id="ENSGT00940000156593"/>
<dbReference type="HOGENOM" id="CLU_040729_9_3_1"/>
<dbReference type="InParanoid" id="P40946"/>
<dbReference type="OMA" id="GGQISKM"/>
<dbReference type="OrthoDB" id="2011769at2759"/>
<dbReference type="PhylomeDB" id="P40946"/>
<dbReference type="Reactome" id="R-DME-8854214">
    <property type="pathway name" value="TBC/RABGAPs"/>
</dbReference>
<dbReference type="BioGRID-ORCS" id="36699">
    <property type="hits" value="1 hit in 1 CRISPR screen"/>
</dbReference>
<dbReference type="GenomeRNAi" id="36699"/>
<dbReference type="PRO" id="PR:P40946"/>
<dbReference type="Proteomes" id="UP000000803">
    <property type="component" value="Chromosome 2R"/>
</dbReference>
<dbReference type="Bgee" id="FBgn0013750">
    <property type="expression patterns" value="Expressed in cleaving embryo and 237 other cell types or tissues"/>
</dbReference>
<dbReference type="GO" id="GO:0032154">
    <property type="term" value="C:cleavage furrow"/>
    <property type="evidence" value="ECO:0000314"/>
    <property type="project" value="FlyBase"/>
</dbReference>
<dbReference type="GO" id="GO:0005737">
    <property type="term" value="C:cytoplasm"/>
    <property type="evidence" value="ECO:0000318"/>
    <property type="project" value="GO_Central"/>
</dbReference>
<dbReference type="GO" id="GO:0005829">
    <property type="term" value="C:cytosol"/>
    <property type="evidence" value="ECO:0000314"/>
    <property type="project" value="FlyBase"/>
</dbReference>
<dbReference type="GO" id="GO:0005769">
    <property type="term" value="C:early endosome"/>
    <property type="evidence" value="ECO:0000314"/>
    <property type="project" value="FlyBase"/>
</dbReference>
<dbReference type="GO" id="GO:0005794">
    <property type="term" value="C:Golgi apparatus"/>
    <property type="evidence" value="ECO:0007669"/>
    <property type="project" value="UniProtKB-SubCell"/>
</dbReference>
<dbReference type="GO" id="GO:0005886">
    <property type="term" value="C:plasma membrane"/>
    <property type="evidence" value="ECO:0000314"/>
    <property type="project" value="FlyBase"/>
</dbReference>
<dbReference type="GO" id="GO:0098793">
    <property type="term" value="C:presynapse"/>
    <property type="evidence" value="ECO:0007669"/>
    <property type="project" value="GOC"/>
</dbReference>
<dbReference type="GO" id="GO:0055037">
    <property type="term" value="C:recycling endosome"/>
    <property type="evidence" value="ECO:0000314"/>
    <property type="project" value="FlyBase"/>
</dbReference>
<dbReference type="GO" id="GO:0008047">
    <property type="term" value="F:enzyme activator activity"/>
    <property type="evidence" value="ECO:0000314"/>
    <property type="project" value="FlyBase"/>
</dbReference>
<dbReference type="GO" id="GO:0005525">
    <property type="term" value="F:GTP binding"/>
    <property type="evidence" value="ECO:0000318"/>
    <property type="project" value="GO_Central"/>
</dbReference>
<dbReference type="GO" id="GO:0003924">
    <property type="term" value="F:GTPase activity"/>
    <property type="evidence" value="ECO:0000250"/>
    <property type="project" value="FlyBase"/>
</dbReference>
<dbReference type="GO" id="GO:0030036">
    <property type="term" value="P:actin cytoskeleton organization"/>
    <property type="evidence" value="ECO:0000315"/>
    <property type="project" value="FlyBase"/>
</dbReference>
<dbReference type="GO" id="GO:0048149">
    <property type="term" value="P:behavioral response to ethanol"/>
    <property type="evidence" value="ECO:0000315"/>
    <property type="project" value="FlyBase"/>
</dbReference>
<dbReference type="GO" id="GO:0001745">
    <property type="term" value="P:compound eye morphogenesis"/>
    <property type="evidence" value="ECO:0000315"/>
    <property type="project" value="UniProtKB"/>
</dbReference>
<dbReference type="GO" id="GO:0007476">
    <property type="term" value="P:imaginal disc-derived wing morphogenesis"/>
    <property type="evidence" value="ECO:0000315"/>
    <property type="project" value="FlyBase"/>
</dbReference>
<dbReference type="GO" id="GO:0006886">
    <property type="term" value="P:intracellular protein transport"/>
    <property type="evidence" value="ECO:0000318"/>
    <property type="project" value="GO_Central"/>
</dbReference>
<dbReference type="GO" id="GO:0007112">
    <property type="term" value="P:male meiosis cytokinesis"/>
    <property type="evidence" value="ECO:0000315"/>
    <property type="project" value="FlyBase"/>
</dbReference>
<dbReference type="GO" id="GO:0007520">
    <property type="term" value="P:myoblast fusion"/>
    <property type="evidence" value="ECO:0000315"/>
    <property type="project" value="FlyBase"/>
</dbReference>
<dbReference type="GO" id="GO:0007269">
    <property type="term" value="P:neurotransmitter secretion"/>
    <property type="evidence" value="ECO:0000303"/>
    <property type="project" value="FlyBase"/>
</dbReference>
<dbReference type="GO" id="GO:0010628">
    <property type="term" value="P:positive regulation of gene expression"/>
    <property type="evidence" value="ECO:0000315"/>
    <property type="project" value="FlyBase"/>
</dbReference>
<dbReference type="GO" id="GO:0097305">
    <property type="term" value="P:response to alcohol"/>
    <property type="evidence" value="ECO:0000316"/>
    <property type="project" value="UniProtKB"/>
</dbReference>
<dbReference type="GO" id="GO:0007283">
    <property type="term" value="P:spermatogenesis"/>
    <property type="evidence" value="ECO:0000315"/>
    <property type="project" value="FlyBase"/>
</dbReference>
<dbReference type="GO" id="GO:0048488">
    <property type="term" value="P:synaptic vesicle endocytosis"/>
    <property type="evidence" value="ECO:0000304"/>
    <property type="project" value="FlyBase"/>
</dbReference>
<dbReference type="GO" id="GO:0016192">
    <property type="term" value="P:vesicle-mediated transport"/>
    <property type="evidence" value="ECO:0000318"/>
    <property type="project" value="GO_Central"/>
</dbReference>
<dbReference type="CDD" id="cd04149">
    <property type="entry name" value="Arf6"/>
    <property type="match status" value="1"/>
</dbReference>
<dbReference type="FunFam" id="3.40.50.300:FF:000286">
    <property type="entry name" value="ADP-ribosylation factor 6"/>
    <property type="match status" value="1"/>
</dbReference>
<dbReference type="Gene3D" id="3.40.50.300">
    <property type="entry name" value="P-loop containing nucleotide triphosphate hydrolases"/>
    <property type="match status" value="1"/>
</dbReference>
<dbReference type="InterPro" id="IPR041838">
    <property type="entry name" value="Arf6"/>
</dbReference>
<dbReference type="InterPro" id="IPR027417">
    <property type="entry name" value="P-loop_NTPase"/>
</dbReference>
<dbReference type="InterPro" id="IPR005225">
    <property type="entry name" value="Small_GTP-bd"/>
</dbReference>
<dbReference type="InterPro" id="IPR024156">
    <property type="entry name" value="Small_GTPase_ARF"/>
</dbReference>
<dbReference type="InterPro" id="IPR006689">
    <property type="entry name" value="Small_GTPase_ARF/SAR"/>
</dbReference>
<dbReference type="NCBIfam" id="TIGR00231">
    <property type="entry name" value="small_GTP"/>
    <property type="match status" value="1"/>
</dbReference>
<dbReference type="PANTHER" id="PTHR11711">
    <property type="entry name" value="ADP RIBOSYLATION FACTOR-RELATED"/>
    <property type="match status" value="1"/>
</dbReference>
<dbReference type="Pfam" id="PF00025">
    <property type="entry name" value="Arf"/>
    <property type="match status" value="1"/>
</dbReference>
<dbReference type="PRINTS" id="PR00328">
    <property type="entry name" value="SAR1GTPBP"/>
</dbReference>
<dbReference type="SMART" id="SM00177">
    <property type="entry name" value="ARF"/>
    <property type="match status" value="1"/>
</dbReference>
<dbReference type="SMART" id="SM00175">
    <property type="entry name" value="RAB"/>
    <property type="match status" value="1"/>
</dbReference>
<dbReference type="SMART" id="SM00178">
    <property type="entry name" value="SAR"/>
    <property type="match status" value="1"/>
</dbReference>
<dbReference type="SUPFAM" id="SSF52540">
    <property type="entry name" value="P-loop containing nucleoside triphosphate hydrolases"/>
    <property type="match status" value="1"/>
</dbReference>
<dbReference type="PROSITE" id="PS51417">
    <property type="entry name" value="ARF"/>
    <property type="match status" value="1"/>
</dbReference>
<gene>
    <name evidence="9" type="primary">Arf6</name>
    <name evidence="7" type="synonym">Arf3</name>
    <name evidence="9" type="synonym">Arf51F</name>
    <name evidence="9" type="ORF">CG8156</name>
</gene>
<protein>
    <recommendedName>
        <fullName evidence="8">ADP-ribosylation factor 6</fullName>
        <shortName>ARF6</shortName>
    </recommendedName>
    <alternativeName>
        <fullName evidence="9">ADP ribosylation factor at 51F</fullName>
    </alternativeName>
    <alternativeName>
        <fullName evidence="7">ADP-ribosylation factor 3</fullName>
    </alternativeName>
</protein>
<keyword id="KW-0931">ER-Golgi transport</keyword>
<keyword id="KW-0333">Golgi apparatus</keyword>
<keyword id="KW-0342">GTP-binding</keyword>
<keyword id="KW-0449">Lipoprotein</keyword>
<keyword id="KW-0519">Myristate</keyword>
<keyword id="KW-0547">Nucleotide-binding</keyword>
<keyword id="KW-0653">Protein transport</keyword>
<keyword id="KW-1185">Reference proteome</keyword>
<keyword id="KW-0813">Transport</keyword>
<comment type="function">
    <text evidence="2 5 6">GTP-binding protein involved in protein trafficking; may modulate vesicle budding and uncoating within the Golgi apparatus (By similarity). Promotes cell movement and remodeling of the actin cytoskeleton during compound eye morphogenesis (PubMed:21976699). Required for normal ethanol-induced tolerance and preference (PubMed:28607459). Probably after Efa6-mediated activation, counteracts ethanol-induced sedation (PubMed:28607459).</text>
</comment>
<comment type="activity regulation">
    <text evidence="3 6">Activation is generally mediated by a guanine exchange factor (GEF), while inactivation through hydrolysis of bound GTP is catalyzed by a GTPase activating protein (GAP) (By similarity). May be activated by Efa6 (PubMed:28607459).</text>
</comment>
<comment type="subcellular location">
    <subcellularLocation>
        <location>Golgi apparatus</location>
    </subcellularLocation>
</comment>
<comment type="tissue specificity">
    <text evidence="6">Expressed in the head (at protein level).</text>
</comment>
<comment type="disruption phenotype">
    <text evidence="5 6">Results in enhances preference and sensitivity to alcohol (PubMed:28607459). Fails to develop tolerance to repeated ethanol exposures (PubMed:28607459). Conditional RNAi-mediated knockdown in the eye results in aberrant compound eye morphogenesis, with defective cell intercalation patterns associated with altered actin dynamics (PubMed:21976699).</text>
</comment>
<comment type="similarity">
    <text evidence="8">Belongs to the small GTPase superfamily. Arf family.</text>
</comment>
<accession>P40946</accession>
<accession>A4UZH7</accession>
<accession>Q0E966</accession>
<accession>Q9V7B0</accession>
<reference key="1">
    <citation type="journal article" date="1994" name="J. Biol. Chem.">
        <title>Characterization of class II and class III ADP-ribosylation factor genes and proteins in Drosophila melanogaster.</title>
        <authorList>
            <person name="Lee F.-J.S."/>
            <person name="Stevens L.A."/>
            <person name="Hall L.M."/>
            <person name="Murtagh J.J. Jr."/>
            <person name="Kao Y.L."/>
            <person name="Moss J."/>
            <person name="Vaughan M."/>
        </authorList>
    </citation>
    <scope>NUCLEOTIDE SEQUENCE [GENOMIC DNA / MRNA]</scope>
</reference>
<reference key="2">
    <citation type="journal article" date="2000" name="Science">
        <title>The genome sequence of Drosophila melanogaster.</title>
        <authorList>
            <person name="Adams M.D."/>
            <person name="Celniker S.E."/>
            <person name="Holt R.A."/>
            <person name="Evans C.A."/>
            <person name="Gocayne J.D."/>
            <person name="Amanatides P.G."/>
            <person name="Scherer S.E."/>
            <person name="Li P.W."/>
            <person name="Hoskins R.A."/>
            <person name="Galle R.F."/>
            <person name="George R.A."/>
            <person name="Lewis S.E."/>
            <person name="Richards S."/>
            <person name="Ashburner M."/>
            <person name="Henderson S.N."/>
            <person name="Sutton G.G."/>
            <person name="Wortman J.R."/>
            <person name="Yandell M.D."/>
            <person name="Zhang Q."/>
            <person name="Chen L.X."/>
            <person name="Brandon R.C."/>
            <person name="Rogers Y.-H.C."/>
            <person name="Blazej R.G."/>
            <person name="Champe M."/>
            <person name="Pfeiffer B.D."/>
            <person name="Wan K.H."/>
            <person name="Doyle C."/>
            <person name="Baxter E.G."/>
            <person name="Helt G."/>
            <person name="Nelson C.R."/>
            <person name="Miklos G.L.G."/>
            <person name="Abril J.F."/>
            <person name="Agbayani A."/>
            <person name="An H.-J."/>
            <person name="Andrews-Pfannkoch C."/>
            <person name="Baldwin D."/>
            <person name="Ballew R.M."/>
            <person name="Basu A."/>
            <person name="Baxendale J."/>
            <person name="Bayraktaroglu L."/>
            <person name="Beasley E.M."/>
            <person name="Beeson K.Y."/>
            <person name="Benos P.V."/>
            <person name="Berman B.P."/>
            <person name="Bhandari D."/>
            <person name="Bolshakov S."/>
            <person name="Borkova D."/>
            <person name="Botchan M.R."/>
            <person name="Bouck J."/>
            <person name="Brokstein P."/>
            <person name="Brottier P."/>
            <person name="Burtis K.C."/>
            <person name="Busam D.A."/>
            <person name="Butler H."/>
            <person name="Cadieu E."/>
            <person name="Center A."/>
            <person name="Chandra I."/>
            <person name="Cherry J.M."/>
            <person name="Cawley S."/>
            <person name="Dahlke C."/>
            <person name="Davenport L.B."/>
            <person name="Davies P."/>
            <person name="de Pablos B."/>
            <person name="Delcher A."/>
            <person name="Deng Z."/>
            <person name="Mays A.D."/>
            <person name="Dew I."/>
            <person name="Dietz S.M."/>
            <person name="Dodson K."/>
            <person name="Doup L.E."/>
            <person name="Downes M."/>
            <person name="Dugan-Rocha S."/>
            <person name="Dunkov B.C."/>
            <person name="Dunn P."/>
            <person name="Durbin K.J."/>
            <person name="Evangelista C.C."/>
            <person name="Ferraz C."/>
            <person name="Ferriera S."/>
            <person name="Fleischmann W."/>
            <person name="Fosler C."/>
            <person name="Gabrielian A.E."/>
            <person name="Garg N.S."/>
            <person name="Gelbart W.M."/>
            <person name="Glasser K."/>
            <person name="Glodek A."/>
            <person name="Gong F."/>
            <person name="Gorrell J.H."/>
            <person name="Gu Z."/>
            <person name="Guan P."/>
            <person name="Harris M."/>
            <person name="Harris N.L."/>
            <person name="Harvey D.A."/>
            <person name="Heiman T.J."/>
            <person name="Hernandez J.R."/>
            <person name="Houck J."/>
            <person name="Hostin D."/>
            <person name="Houston K.A."/>
            <person name="Howland T.J."/>
            <person name="Wei M.-H."/>
            <person name="Ibegwam C."/>
            <person name="Jalali M."/>
            <person name="Kalush F."/>
            <person name="Karpen G.H."/>
            <person name="Ke Z."/>
            <person name="Kennison J.A."/>
            <person name="Ketchum K.A."/>
            <person name="Kimmel B.E."/>
            <person name="Kodira C.D."/>
            <person name="Kraft C.L."/>
            <person name="Kravitz S."/>
            <person name="Kulp D."/>
            <person name="Lai Z."/>
            <person name="Lasko P."/>
            <person name="Lei Y."/>
            <person name="Levitsky A.A."/>
            <person name="Li J.H."/>
            <person name="Li Z."/>
            <person name="Liang Y."/>
            <person name="Lin X."/>
            <person name="Liu X."/>
            <person name="Mattei B."/>
            <person name="McIntosh T.C."/>
            <person name="McLeod M.P."/>
            <person name="McPherson D."/>
            <person name="Merkulov G."/>
            <person name="Milshina N.V."/>
            <person name="Mobarry C."/>
            <person name="Morris J."/>
            <person name="Moshrefi A."/>
            <person name="Mount S.M."/>
            <person name="Moy M."/>
            <person name="Murphy B."/>
            <person name="Murphy L."/>
            <person name="Muzny D.M."/>
            <person name="Nelson D.L."/>
            <person name="Nelson D.R."/>
            <person name="Nelson K.A."/>
            <person name="Nixon K."/>
            <person name="Nusskern D.R."/>
            <person name="Pacleb J.M."/>
            <person name="Palazzolo M."/>
            <person name="Pittman G.S."/>
            <person name="Pan S."/>
            <person name="Pollard J."/>
            <person name="Puri V."/>
            <person name="Reese M.G."/>
            <person name="Reinert K."/>
            <person name="Remington K."/>
            <person name="Saunders R.D.C."/>
            <person name="Scheeler F."/>
            <person name="Shen H."/>
            <person name="Shue B.C."/>
            <person name="Siden-Kiamos I."/>
            <person name="Simpson M."/>
            <person name="Skupski M.P."/>
            <person name="Smith T.J."/>
            <person name="Spier E."/>
            <person name="Spradling A.C."/>
            <person name="Stapleton M."/>
            <person name="Strong R."/>
            <person name="Sun E."/>
            <person name="Svirskas R."/>
            <person name="Tector C."/>
            <person name="Turner R."/>
            <person name="Venter E."/>
            <person name="Wang A.H."/>
            <person name="Wang X."/>
            <person name="Wang Z.-Y."/>
            <person name="Wassarman D.A."/>
            <person name="Weinstock G.M."/>
            <person name="Weissenbach J."/>
            <person name="Williams S.M."/>
            <person name="Woodage T."/>
            <person name="Worley K.C."/>
            <person name="Wu D."/>
            <person name="Yang S."/>
            <person name="Yao Q.A."/>
            <person name="Ye J."/>
            <person name="Yeh R.-F."/>
            <person name="Zaveri J.S."/>
            <person name="Zhan M."/>
            <person name="Zhang G."/>
            <person name="Zhao Q."/>
            <person name="Zheng L."/>
            <person name="Zheng X.H."/>
            <person name="Zhong F.N."/>
            <person name="Zhong W."/>
            <person name="Zhou X."/>
            <person name="Zhu S.C."/>
            <person name="Zhu X."/>
            <person name="Smith H.O."/>
            <person name="Gibbs R.A."/>
            <person name="Myers E.W."/>
            <person name="Rubin G.M."/>
            <person name="Venter J.C."/>
        </authorList>
    </citation>
    <scope>NUCLEOTIDE SEQUENCE [LARGE SCALE GENOMIC DNA]</scope>
    <source>
        <strain>Berkeley</strain>
    </source>
</reference>
<reference key="3">
    <citation type="journal article" date="2002" name="Genome Biol.">
        <title>Annotation of the Drosophila melanogaster euchromatic genome: a systematic review.</title>
        <authorList>
            <person name="Misra S."/>
            <person name="Crosby M.A."/>
            <person name="Mungall C.J."/>
            <person name="Matthews B.B."/>
            <person name="Campbell K.S."/>
            <person name="Hradecky P."/>
            <person name="Huang Y."/>
            <person name="Kaminker J.S."/>
            <person name="Millburn G.H."/>
            <person name="Prochnik S.E."/>
            <person name="Smith C.D."/>
            <person name="Tupy J.L."/>
            <person name="Whitfield E.J."/>
            <person name="Bayraktaroglu L."/>
            <person name="Berman B.P."/>
            <person name="Bettencourt B.R."/>
            <person name="Celniker S.E."/>
            <person name="de Grey A.D.N.J."/>
            <person name="Drysdale R.A."/>
            <person name="Harris N.L."/>
            <person name="Richter J."/>
            <person name="Russo S."/>
            <person name="Schroeder A.J."/>
            <person name="Shu S.Q."/>
            <person name="Stapleton M."/>
            <person name="Yamada C."/>
            <person name="Ashburner M."/>
            <person name="Gelbart W.M."/>
            <person name="Rubin G.M."/>
            <person name="Lewis S.E."/>
        </authorList>
    </citation>
    <scope>GENOME REANNOTATION</scope>
    <source>
        <strain>Berkeley</strain>
    </source>
</reference>
<reference key="4">
    <citation type="journal article" date="2002" name="Genome Biol.">
        <title>A Drosophila full-length cDNA resource.</title>
        <authorList>
            <person name="Stapleton M."/>
            <person name="Carlson J.W."/>
            <person name="Brokstein P."/>
            <person name="Yu C."/>
            <person name="Champe M."/>
            <person name="George R.A."/>
            <person name="Guarin H."/>
            <person name="Kronmiller B."/>
            <person name="Pacleb J.M."/>
            <person name="Park S."/>
            <person name="Wan K.H."/>
            <person name="Rubin G.M."/>
            <person name="Celniker S.E."/>
        </authorList>
    </citation>
    <scope>NUCLEOTIDE SEQUENCE [LARGE SCALE MRNA]</scope>
    <source>
        <strain>Berkeley</strain>
        <tissue>Embryo</tissue>
    </source>
</reference>
<reference key="5">
    <citation type="journal article" date="2011" name="Mol. Biol. Cell">
        <title>Role for a Cindr-Arf6 axis in patterning emerging epithelia.</title>
        <authorList>
            <person name="Johnson R.I."/>
            <person name="Sedgwick A."/>
            <person name="D'Souza-Schorey C."/>
            <person name="Cagan R.L."/>
        </authorList>
    </citation>
    <scope>FUNCTION</scope>
    <scope>DISRUPTION PHENOTYPE</scope>
</reference>
<reference key="6">
    <citation type="journal article" date="2018" name="Mol. Psychiatry">
        <title>The Arf6 activator Efa6/PSD3 confers regional specificity and modulates ethanol consumption in Drosophila and humans.</title>
        <authorList>
            <consortium name="IMAGEN Consortium"/>
            <person name="Gonzalez D.A."/>
            <person name="Jia T."/>
            <person name="Pinzon J.H."/>
            <person name="Acevedo S.F."/>
            <person name="Ojelade S.A."/>
            <person name="Xu B."/>
            <person name="Tay N."/>
            <person name="Desrivieres S."/>
            <person name="Hernandez J.L."/>
            <person name="Banaschewski T."/>
            <person name="Buechel C."/>
            <person name="Bokde A.L.W."/>
            <person name="Conrod P.J."/>
            <person name="Flor H."/>
            <person name="Frouin V."/>
            <person name="Gallinat J."/>
            <person name="Garavan H."/>
            <person name="Gowland P.A."/>
            <person name="Heinz A."/>
            <person name="Ittermann B."/>
            <person name="Lathrop M."/>
            <person name="Martinot J.L."/>
            <person name="Paus T."/>
            <person name="Smolka M.N."/>
            <person name="Rodan A.R."/>
            <person name="Schumann G."/>
            <person name="Rothenfluh A."/>
        </authorList>
    </citation>
    <scope>FUNCTION</scope>
    <scope>ACTIVITY REGULATION</scope>
    <scope>TISSUE SPECIFICITY</scope>
    <scope>DISRUPTION PHENOTYPE</scope>
</reference>
<evidence type="ECO:0000250" key="1"/>
<evidence type="ECO:0000250" key="2">
    <source>
        <dbReference type="UniProtKB" id="P40945"/>
    </source>
</evidence>
<evidence type="ECO:0000250" key="3">
    <source>
        <dbReference type="UniProtKB" id="P62330"/>
    </source>
</evidence>
<evidence type="ECO:0000255" key="4"/>
<evidence type="ECO:0000269" key="5">
    <source>
    </source>
</evidence>
<evidence type="ECO:0000269" key="6">
    <source>
    </source>
</evidence>
<evidence type="ECO:0000303" key="7">
    <source>
    </source>
</evidence>
<evidence type="ECO:0000305" key="8"/>
<evidence type="ECO:0000312" key="9">
    <source>
        <dbReference type="FlyBase" id="FBgn0013750"/>
    </source>
</evidence>
<organism>
    <name type="scientific">Drosophila melanogaster</name>
    <name type="common">Fruit fly</name>
    <dbReference type="NCBI Taxonomy" id="7227"/>
    <lineage>
        <taxon>Eukaryota</taxon>
        <taxon>Metazoa</taxon>
        <taxon>Ecdysozoa</taxon>
        <taxon>Arthropoda</taxon>
        <taxon>Hexapoda</taxon>
        <taxon>Insecta</taxon>
        <taxon>Pterygota</taxon>
        <taxon>Neoptera</taxon>
        <taxon>Endopterygota</taxon>
        <taxon>Diptera</taxon>
        <taxon>Brachycera</taxon>
        <taxon>Muscomorpha</taxon>
        <taxon>Ephydroidea</taxon>
        <taxon>Drosophilidae</taxon>
        <taxon>Drosophila</taxon>
        <taxon>Sophophora</taxon>
    </lineage>
</organism>